<name>RL11_LISMH</name>
<reference key="1">
    <citation type="journal article" date="2011" name="J. Bacteriol.">
        <title>Genome sequence of lineage III Listeria monocytogenes strain HCC23.</title>
        <authorList>
            <person name="Steele C.L."/>
            <person name="Donaldson J.R."/>
            <person name="Paul D."/>
            <person name="Banes M.M."/>
            <person name="Arick T."/>
            <person name="Bridges S.M."/>
            <person name="Lawrence M.L."/>
        </authorList>
    </citation>
    <scope>NUCLEOTIDE SEQUENCE [LARGE SCALE GENOMIC DNA]</scope>
    <source>
        <strain>HCC23</strain>
    </source>
</reference>
<sequence>MAKKVIKEVKLQIPAGKANPAPPVGPALGQAGVNIMGFCKEFNARTADQAGLIIPVVITVFEDRSFTFITKTPPAAVLLKKAAKVEKGSGEPNKTKVASVTRAQVQEIAETKMPDLNAANVESAMLMVEGTARSMGITIQD</sequence>
<evidence type="ECO:0000255" key="1">
    <source>
        <dbReference type="HAMAP-Rule" id="MF_00736"/>
    </source>
</evidence>
<evidence type="ECO:0000305" key="2"/>
<proteinExistence type="inferred from homology"/>
<feature type="chain" id="PRO_1000195663" description="Large ribosomal subunit protein uL11">
    <location>
        <begin position="1"/>
        <end position="141"/>
    </location>
</feature>
<organism>
    <name type="scientific">Listeria monocytogenes serotype 4a (strain HCC23)</name>
    <dbReference type="NCBI Taxonomy" id="552536"/>
    <lineage>
        <taxon>Bacteria</taxon>
        <taxon>Bacillati</taxon>
        <taxon>Bacillota</taxon>
        <taxon>Bacilli</taxon>
        <taxon>Bacillales</taxon>
        <taxon>Listeriaceae</taxon>
        <taxon>Listeria</taxon>
    </lineage>
</organism>
<dbReference type="EMBL" id="CP001175">
    <property type="protein sequence ID" value="ACK40729.1"/>
    <property type="molecule type" value="Genomic_DNA"/>
</dbReference>
<dbReference type="RefSeq" id="WP_003718336.1">
    <property type="nucleotide sequence ID" value="NC_011660.1"/>
</dbReference>
<dbReference type="SMR" id="B8DF07"/>
<dbReference type="GeneID" id="93238162"/>
<dbReference type="KEGG" id="lmh:LMHCC_2392"/>
<dbReference type="HOGENOM" id="CLU_074237_2_1_9"/>
<dbReference type="GO" id="GO:0022625">
    <property type="term" value="C:cytosolic large ribosomal subunit"/>
    <property type="evidence" value="ECO:0007669"/>
    <property type="project" value="TreeGrafter"/>
</dbReference>
<dbReference type="GO" id="GO:0070180">
    <property type="term" value="F:large ribosomal subunit rRNA binding"/>
    <property type="evidence" value="ECO:0007669"/>
    <property type="project" value="UniProtKB-UniRule"/>
</dbReference>
<dbReference type="GO" id="GO:0003735">
    <property type="term" value="F:structural constituent of ribosome"/>
    <property type="evidence" value="ECO:0007669"/>
    <property type="project" value="InterPro"/>
</dbReference>
<dbReference type="GO" id="GO:0006412">
    <property type="term" value="P:translation"/>
    <property type="evidence" value="ECO:0007669"/>
    <property type="project" value="UniProtKB-UniRule"/>
</dbReference>
<dbReference type="CDD" id="cd00349">
    <property type="entry name" value="Ribosomal_L11"/>
    <property type="match status" value="1"/>
</dbReference>
<dbReference type="FunFam" id="1.10.10.250:FF:000001">
    <property type="entry name" value="50S ribosomal protein L11"/>
    <property type="match status" value="1"/>
</dbReference>
<dbReference type="FunFam" id="3.30.1550.10:FF:000001">
    <property type="entry name" value="50S ribosomal protein L11"/>
    <property type="match status" value="1"/>
</dbReference>
<dbReference type="Gene3D" id="1.10.10.250">
    <property type="entry name" value="Ribosomal protein L11, C-terminal domain"/>
    <property type="match status" value="1"/>
</dbReference>
<dbReference type="Gene3D" id="3.30.1550.10">
    <property type="entry name" value="Ribosomal protein L11/L12, N-terminal domain"/>
    <property type="match status" value="1"/>
</dbReference>
<dbReference type="HAMAP" id="MF_00736">
    <property type="entry name" value="Ribosomal_uL11"/>
    <property type="match status" value="1"/>
</dbReference>
<dbReference type="InterPro" id="IPR000911">
    <property type="entry name" value="Ribosomal_uL11"/>
</dbReference>
<dbReference type="InterPro" id="IPR006519">
    <property type="entry name" value="Ribosomal_uL11_bac-typ"/>
</dbReference>
<dbReference type="InterPro" id="IPR020783">
    <property type="entry name" value="Ribosomal_uL11_C"/>
</dbReference>
<dbReference type="InterPro" id="IPR036769">
    <property type="entry name" value="Ribosomal_uL11_C_sf"/>
</dbReference>
<dbReference type="InterPro" id="IPR020784">
    <property type="entry name" value="Ribosomal_uL11_N"/>
</dbReference>
<dbReference type="InterPro" id="IPR036796">
    <property type="entry name" value="Ribosomal_uL11_N_sf"/>
</dbReference>
<dbReference type="NCBIfam" id="TIGR01632">
    <property type="entry name" value="L11_bact"/>
    <property type="match status" value="1"/>
</dbReference>
<dbReference type="PANTHER" id="PTHR11661">
    <property type="entry name" value="60S RIBOSOMAL PROTEIN L12"/>
    <property type="match status" value="1"/>
</dbReference>
<dbReference type="PANTHER" id="PTHR11661:SF1">
    <property type="entry name" value="LARGE RIBOSOMAL SUBUNIT PROTEIN UL11M"/>
    <property type="match status" value="1"/>
</dbReference>
<dbReference type="Pfam" id="PF00298">
    <property type="entry name" value="Ribosomal_L11"/>
    <property type="match status" value="1"/>
</dbReference>
<dbReference type="Pfam" id="PF03946">
    <property type="entry name" value="Ribosomal_L11_N"/>
    <property type="match status" value="1"/>
</dbReference>
<dbReference type="SMART" id="SM00649">
    <property type="entry name" value="RL11"/>
    <property type="match status" value="1"/>
</dbReference>
<dbReference type="SUPFAM" id="SSF54747">
    <property type="entry name" value="Ribosomal L11/L12e N-terminal domain"/>
    <property type="match status" value="1"/>
</dbReference>
<dbReference type="SUPFAM" id="SSF46906">
    <property type="entry name" value="Ribosomal protein L11, C-terminal domain"/>
    <property type="match status" value="1"/>
</dbReference>
<comment type="function">
    <text evidence="1">Forms part of the ribosomal stalk which helps the ribosome interact with GTP-bound translation factors.</text>
</comment>
<comment type="subunit">
    <text evidence="1">Part of the ribosomal stalk of the 50S ribosomal subunit. Interacts with L10 and the large rRNA to form the base of the stalk. L10 forms an elongated spine to which L12 dimers bind in a sequential fashion forming a multimeric L10(L12)X complex.</text>
</comment>
<comment type="PTM">
    <text evidence="1">One or more lysine residues are methylated.</text>
</comment>
<comment type="similarity">
    <text evidence="1">Belongs to the universal ribosomal protein uL11 family.</text>
</comment>
<accession>B8DF07</accession>
<gene>
    <name evidence="1" type="primary">rplK</name>
    <name type="ordered locus">LMHCC_2392</name>
</gene>
<keyword id="KW-0488">Methylation</keyword>
<keyword id="KW-0687">Ribonucleoprotein</keyword>
<keyword id="KW-0689">Ribosomal protein</keyword>
<keyword id="KW-0694">RNA-binding</keyword>
<keyword id="KW-0699">rRNA-binding</keyword>
<protein>
    <recommendedName>
        <fullName evidence="1">Large ribosomal subunit protein uL11</fullName>
    </recommendedName>
    <alternativeName>
        <fullName evidence="2">50S ribosomal protein L11</fullName>
    </alternativeName>
</protein>